<organism>
    <name type="scientific">Haloquadratum walsbyi (strain DSM 16790 / HBSQ001)</name>
    <dbReference type="NCBI Taxonomy" id="362976"/>
    <lineage>
        <taxon>Archaea</taxon>
        <taxon>Methanobacteriati</taxon>
        <taxon>Methanobacteriota</taxon>
        <taxon>Stenosarchaea group</taxon>
        <taxon>Halobacteria</taxon>
        <taxon>Halobacteriales</taxon>
        <taxon>Haloferacaceae</taxon>
        <taxon>Haloquadratum</taxon>
    </lineage>
</organism>
<feature type="chain" id="PRO_1000188923" description="Urease subunit beta">
    <location>
        <begin position="1"/>
        <end position="126"/>
    </location>
</feature>
<proteinExistence type="inferred from homology"/>
<protein>
    <recommendedName>
        <fullName evidence="1">Urease subunit beta</fullName>
        <ecNumber evidence="1">3.5.1.5</ecNumber>
    </recommendedName>
    <alternativeName>
        <fullName evidence="1">Urea amidohydrolase subunit beta</fullName>
    </alternativeName>
</protein>
<sequence length="126" mass="13803">MSNITPGELIPADKPVEINADRETTSVTVENTGDRPSQVGSHFHFFETNPALSFDRKSAYGMRLDIPAGTAIRFEPGCEKDVDLVAIGGDRIVKGMGGLVNGELDADETREQAFERARNADYMEEQ</sequence>
<evidence type="ECO:0000255" key="1">
    <source>
        <dbReference type="HAMAP-Rule" id="MF_01954"/>
    </source>
</evidence>
<keyword id="KW-0963">Cytoplasm</keyword>
<keyword id="KW-0378">Hydrolase</keyword>
<keyword id="KW-1185">Reference proteome</keyword>
<accession>Q18EC0</accession>
<name>URE2_HALWD</name>
<gene>
    <name evidence="1" type="primary">ureB</name>
    <name type="ordered locus">HQ_3625A</name>
</gene>
<reference key="1">
    <citation type="journal article" date="2006" name="BMC Genomics">
        <title>The genome of the square archaeon Haloquadratum walsbyi: life at the limits of water activity.</title>
        <authorList>
            <person name="Bolhuis H."/>
            <person name="Palm P."/>
            <person name="Wende A."/>
            <person name="Falb M."/>
            <person name="Rampp M."/>
            <person name="Rodriguez-Valera F."/>
            <person name="Pfeiffer F."/>
            <person name="Oesterhelt D."/>
        </authorList>
    </citation>
    <scope>NUCLEOTIDE SEQUENCE [LARGE SCALE GENOMIC DNA]</scope>
    <source>
        <strain>DSM 16790 / HBSQ001</strain>
    </source>
</reference>
<dbReference type="EC" id="3.5.1.5" evidence="1"/>
<dbReference type="EMBL" id="AM180088">
    <property type="protein sequence ID" value="CAJ53713.1"/>
    <property type="molecule type" value="Genomic_DNA"/>
</dbReference>
<dbReference type="RefSeq" id="WP_011572795.1">
    <property type="nucleotide sequence ID" value="NC_008212.1"/>
</dbReference>
<dbReference type="SMR" id="Q18EC0"/>
<dbReference type="STRING" id="362976.HQ_3625A"/>
<dbReference type="GeneID" id="4194899"/>
<dbReference type="KEGG" id="hwa:HQ_3625A"/>
<dbReference type="eggNOG" id="arCOG04527">
    <property type="taxonomic scope" value="Archaea"/>
</dbReference>
<dbReference type="HOGENOM" id="CLU_129707_2_1_2"/>
<dbReference type="UniPathway" id="UPA00258">
    <property type="reaction ID" value="UER00370"/>
</dbReference>
<dbReference type="Proteomes" id="UP000001975">
    <property type="component" value="Chromosome"/>
</dbReference>
<dbReference type="GO" id="GO:0035550">
    <property type="term" value="C:urease complex"/>
    <property type="evidence" value="ECO:0007669"/>
    <property type="project" value="InterPro"/>
</dbReference>
<dbReference type="GO" id="GO:0009039">
    <property type="term" value="F:urease activity"/>
    <property type="evidence" value="ECO:0007669"/>
    <property type="project" value="UniProtKB-UniRule"/>
</dbReference>
<dbReference type="GO" id="GO:0043419">
    <property type="term" value="P:urea catabolic process"/>
    <property type="evidence" value="ECO:0007669"/>
    <property type="project" value="UniProtKB-UniRule"/>
</dbReference>
<dbReference type="CDD" id="cd00407">
    <property type="entry name" value="Urease_beta"/>
    <property type="match status" value="1"/>
</dbReference>
<dbReference type="FunFam" id="2.10.150.10:FF:000001">
    <property type="entry name" value="Urease subunit beta"/>
    <property type="match status" value="1"/>
</dbReference>
<dbReference type="Gene3D" id="2.10.150.10">
    <property type="entry name" value="Urease, beta subunit"/>
    <property type="match status" value="1"/>
</dbReference>
<dbReference type="HAMAP" id="MF_01954">
    <property type="entry name" value="Urease_beta"/>
    <property type="match status" value="1"/>
</dbReference>
<dbReference type="InterPro" id="IPR002019">
    <property type="entry name" value="Urease_beta-like"/>
</dbReference>
<dbReference type="InterPro" id="IPR036461">
    <property type="entry name" value="Urease_betasu_sf"/>
</dbReference>
<dbReference type="InterPro" id="IPR050069">
    <property type="entry name" value="Urease_subunit"/>
</dbReference>
<dbReference type="NCBIfam" id="NF009682">
    <property type="entry name" value="PRK13203.1"/>
    <property type="match status" value="1"/>
</dbReference>
<dbReference type="NCBIfam" id="TIGR00192">
    <property type="entry name" value="urease_beta"/>
    <property type="match status" value="1"/>
</dbReference>
<dbReference type="PANTHER" id="PTHR33569">
    <property type="entry name" value="UREASE"/>
    <property type="match status" value="1"/>
</dbReference>
<dbReference type="PANTHER" id="PTHR33569:SF1">
    <property type="entry name" value="UREASE"/>
    <property type="match status" value="1"/>
</dbReference>
<dbReference type="Pfam" id="PF00699">
    <property type="entry name" value="Urease_beta"/>
    <property type="match status" value="1"/>
</dbReference>
<dbReference type="SUPFAM" id="SSF51278">
    <property type="entry name" value="Urease, beta-subunit"/>
    <property type="match status" value="1"/>
</dbReference>
<comment type="catalytic activity">
    <reaction evidence="1">
        <text>urea + 2 H2O + H(+) = hydrogencarbonate + 2 NH4(+)</text>
        <dbReference type="Rhea" id="RHEA:20557"/>
        <dbReference type="ChEBI" id="CHEBI:15377"/>
        <dbReference type="ChEBI" id="CHEBI:15378"/>
        <dbReference type="ChEBI" id="CHEBI:16199"/>
        <dbReference type="ChEBI" id="CHEBI:17544"/>
        <dbReference type="ChEBI" id="CHEBI:28938"/>
        <dbReference type="EC" id="3.5.1.5"/>
    </reaction>
</comment>
<comment type="pathway">
    <text evidence="1">Nitrogen metabolism; urea degradation; CO(2) and NH(3) from urea (urease route): step 1/1.</text>
</comment>
<comment type="subunit">
    <text evidence="1">Heterotrimer of UreA (gamma), UreB (beta) and UreC (alpha) subunits. Three heterotrimers associate to form the active enzyme.</text>
</comment>
<comment type="subcellular location">
    <subcellularLocation>
        <location evidence="1">Cytoplasm</location>
    </subcellularLocation>
</comment>
<comment type="similarity">
    <text evidence="1">Belongs to the urease beta subunit family.</text>
</comment>